<accession>P81352</accession>
<proteinExistence type="evidence at protein level"/>
<comment type="miscellaneous">
    <text>On the 2D-gel the determined pI of this unknown protein is: 5.7, its MW is: 89.1 kDa.</text>
</comment>
<sequence length="14" mass="1387">XXAKQSMDGNTAAA</sequence>
<reference key="1">
    <citation type="journal article" date="1998" name="Electrophoresis">
        <title>Two-dimensional gel electrophoresis separation and N-terminal sequence analysis of proteins from Clostridium pasteurianum W5.</title>
        <authorList>
            <person name="Flengsrud R."/>
            <person name="Skjeldal L."/>
        </authorList>
    </citation>
    <scope>PROTEIN SEQUENCE</scope>
    <source>
        <strain>ATCC 6013 / DSM 525 / NCIB 9486 / VKM B-1774 / W5</strain>
    </source>
</reference>
<keyword id="KW-0903">Direct protein sequencing</keyword>
<name>UN07_CLOPA</name>
<protein>
    <recommendedName>
        <fullName>Unknown protein CP 7 from 2D-PAGE</fullName>
    </recommendedName>
</protein>
<feature type="chain" id="PRO_0000055538" description="Unknown protein CP 7 from 2D-PAGE">
    <location>
        <begin position="1"/>
        <end position="14" status="greater than"/>
    </location>
</feature>
<feature type="non-terminal residue">
    <location>
        <position position="14"/>
    </location>
</feature>
<organism>
    <name type="scientific">Clostridium pasteurianum</name>
    <dbReference type="NCBI Taxonomy" id="1501"/>
    <lineage>
        <taxon>Bacteria</taxon>
        <taxon>Bacillati</taxon>
        <taxon>Bacillota</taxon>
        <taxon>Clostridia</taxon>
        <taxon>Eubacteriales</taxon>
        <taxon>Clostridiaceae</taxon>
        <taxon>Clostridium</taxon>
    </lineage>
</organism>